<protein>
    <recommendedName>
        <fullName>Nodulation protein S</fullName>
        <ecNumber>2.1.1.-</ecNumber>
    </recommendedName>
</protein>
<feature type="chain" id="PRO_0000096916" description="Nodulation protein S">
    <location>
        <begin position="1"/>
        <end position="238"/>
    </location>
</feature>
<geneLocation type="plasmid">
    <name>sym</name>
</geneLocation>
<keyword id="KW-0489">Methyltransferase</keyword>
<keyword id="KW-0536">Nodulation</keyword>
<keyword id="KW-0614">Plasmid</keyword>
<keyword id="KW-0808">Transferase</keyword>
<reference key="1">
    <citation type="journal article" date="1995" name="Mol. Plant Microbe Interact.">
        <title>The nodS gene of Rhizobium tropici strain CIAT899 is necessary for nodulation on Phaseolus vulgaris and on Leucaena leucocephala.</title>
        <authorList>
            <person name="Waelkens F."/>
            <person name="Voets T."/>
            <person name="Vlassak K."/>
            <person name="Vanderleyden J."/>
            <person name="van Rhijn P."/>
        </authorList>
    </citation>
    <scope>NUCLEOTIDE SEQUENCE [GENOMIC DNA]</scope>
    <source>
        <strain>CIAT899</strain>
    </source>
</reference>
<dbReference type="EC" id="2.1.1.-"/>
<dbReference type="EMBL" id="S77171">
    <property type="protein sequence ID" value="AAB34510.1"/>
    <property type="molecule type" value="Genomic_DNA"/>
</dbReference>
<dbReference type="RefSeq" id="WP_004125970.1">
    <property type="nucleotide sequence ID" value="NZ_JACIFW010000028.1"/>
</dbReference>
<dbReference type="SMR" id="Q53514"/>
<dbReference type="GO" id="GO:0008757">
    <property type="term" value="F:S-adenosylmethionine-dependent methyltransferase activity"/>
    <property type="evidence" value="ECO:0007669"/>
    <property type="project" value="InterPro"/>
</dbReference>
<dbReference type="GO" id="GO:0032259">
    <property type="term" value="P:methylation"/>
    <property type="evidence" value="ECO:0007669"/>
    <property type="project" value="UniProtKB-KW"/>
</dbReference>
<dbReference type="GO" id="GO:0009312">
    <property type="term" value="P:oligosaccharide biosynthetic process"/>
    <property type="evidence" value="ECO:0007669"/>
    <property type="project" value="InterPro"/>
</dbReference>
<dbReference type="CDD" id="cd02440">
    <property type="entry name" value="AdoMet_MTases"/>
    <property type="match status" value="1"/>
</dbReference>
<dbReference type="Gene3D" id="3.40.50.150">
    <property type="entry name" value="Vaccinia Virus protein VP39"/>
    <property type="match status" value="1"/>
</dbReference>
<dbReference type="InterPro" id="IPR020944">
    <property type="entry name" value="NodS"/>
</dbReference>
<dbReference type="InterPro" id="IPR029063">
    <property type="entry name" value="SAM-dependent_MTases_sf"/>
</dbReference>
<dbReference type="InterPro" id="IPR008715">
    <property type="entry name" value="SAM-MeTfrase_NodS-like"/>
</dbReference>
<dbReference type="NCBIfam" id="NF041650">
    <property type="entry name" value="nod_mtase_NodS"/>
    <property type="match status" value="1"/>
</dbReference>
<dbReference type="PANTHER" id="PTHR43464">
    <property type="entry name" value="METHYLTRANSFERASE"/>
    <property type="match status" value="1"/>
</dbReference>
<dbReference type="PANTHER" id="PTHR43464:SF49">
    <property type="entry name" value="TELLURITE METHYLTRANSFERASE"/>
    <property type="match status" value="1"/>
</dbReference>
<dbReference type="Pfam" id="PF05401">
    <property type="entry name" value="NodS"/>
    <property type="match status" value="1"/>
</dbReference>
<dbReference type="PIRSF" id="PIRSF009310">
    <property type="entry name" value="NodS"/>
    <property type="match status" value="1"/>
</dbReference>
<dbReference type="SUPFAM" id="SSF53335">
    <property type="entry name" value="S-adenosyl-L-methionine-dependent methyltransferases"/>
    <property type="match status" value="1"/>
</dbReference>
<organism>
    <name type="scientific">Rhizobium tropici</name>
    <dbReference type="NCBI Taxonomy" id="398"/>
    <lineage>
        <taxon>Bacteria</taxon>
        <taxon>Pseudomonadati</taxon>
        <taxon>Pseudomonadota</taxon>
        <taxon>Alphaproteobacteria</taxon>
        <taxon>Hyphomicrobiales</taxon>
        <taxon>Rhizobiaceae</taxon>
        <taxon>Rhizobium/Agrobacterium group</taxon>
        <taxon>Rhizobium</taxon>
    </lineage>
</organism>
<name>NODS_RHITR</name>
<evidence type="ECO:0000305" key="1"/>
<sequence>MKLRFAGTILREMLPDRWHMTAFAPTSNDRSIKVDGLKTHDNYQLLNRELAADDPWRLDGNPFERKRHAQMLLLSLAQGPIANALEVGCAAGAFTEKLAPHCQRLTVIDVVPEAIDRTRRRMNKPAHISWVVSDVQQFSSEELFDLIVVAEVLYYLGDIAEMRMAVGNLLRMLAPGGHLVFGSARDANCQRWGHVTGAETVIAILTEMLVEVERLELQGDSDNEDCLLVRFRNPVSSS</sequence>
<proteinExistence type="inferred from homology"/>
<gene>
    <name type="primary">nodS</name>
</gene>
<accession>Q53514</accession>
<comment type="function">
    <text>SAM-utilizing methyltransferase involved in nod factor synthesis.</text>
</comment>
<comment type="miscellaneous">
    <text>Necessary for nodulation on Phaseolus vulgaris and on Leucaena leucocephala.</text>
</comment>
<comment type="similarity">
    <text evidence="1">Belongs to the NodS family.</text>
</comment>